<accession>Q5PIS0</accession>
<dbReference type="EMBL" id="CP000026">
    <property type="protein sequence ID" value="AAV79696.1"/>
    <property type="molecule type" value="Genomic_DNA"/>
</dbReference>
<dbReference type="RefSeq" id="WP_000872918.1">
    <property type="nucleotide sequence ID" value="NC_006511.1"/>
</dbReference>
<dbReference type="SMR" id="Q5PIS0"/>
<dbReference type="KEGG" id="spt:SPA3932"/>
<dbReference type="HOGENOM" id="CLU_072626_4_0_6"/>
<dbReference type="Proteomes" id="UP000008185">
    <property type="component" value="Chromosome"/>
</dbReference>
<dbReference type="GO" id="GO:0005829">
    <property type="term" value="C:cytosol"/>
    <property type="evidence" value="ECO:0007669"/>
    <property type="project" value="TreeGrafter"/>
</dbReference>
<dbReference type="GO" id="GO:0060698">
    <property type="term" value="F:endoribonuclease inhibitor activity"/>
    <property type="evidence" value="ECO:0007669"/>
    <property type="project" value="UniProtKB-UniRule"/>
</dbReference>
<dbReference type="GO" id="GO:0019899">
    <property type="term" value="F:enzyme binding"/>
    <property type="evidence" value="ECO:0007669"/>
    <property type="project" value="UniProtKB-UniRule"/>
</dbReference>
<dbReference type="GO" id="GO:1902369">
    <property type="term" value="P:negative regulation of RNA catabolic process"/>
    <property type="evidence" value="ECO:0007669"/>
    <property type="project" value="TreeGrafter"/>
</dbReference>
<dbReference type="CDD" id="cd16841">
    <property type="entry name" value="RraA_family"/>
    <property type="match status" value="1"/>
</dbReference>
<dbReference type="FunFam" id="3.50.30.40:FF:000001">
    <property type="entry name" value="Regulator of ribonuclease activity A"/>
    <property type="match status" value="1"/>
</dbReference>
<dbReference type="Gene3D" id="3.50.30.40">
    <property type="entry name" value="Ribonuclease E inhibitor RraA/RraA-like"/>
    <property type="match status" value="1"/>
</dbReference>
<dbReference type="HAMAP" id="MF_00471">
    <property type="entry name" value="RraA"/>
    <property type="match status" value="1"/>
</dbReference>
<dbReference type="InterPro" id="IPR010203">
    <property type="entry name" value="RraA"/>
</dbReference>
<dbReference type="InterPro" id="IPR005493">
    <property type="entry name" value="RraA/RraA-like"/>
</dbReference>
<dbReference type="InterPro" id="IPR036704">
    <property type="entry name" value="RraA/RraA-like_sf"/>
</dbReference>
<dbReference type="InterPro" id="IPR014339">
    <property type="entry name" value="RraA_gpbac"/>
</dbReference>
<dbReference type="NCBIfam" id="TIGR01935">
    <property type="entry name" value="NOT-MenG"/>
    <property type="match status" value="1"/>
</dbReference>
<dbReference type="NCBIfam" id="NF006875">
    <property type="entry name" value="PRK09372.1"/>
    <property type="match status" value="1"/>
</dbReference>
<dbReference type="NCBIfam" id="TIGR02998">
    <property type="entry name" value="RraA_entero"/>
    <property type="match status" value="1"/>
</dbReference>
<dbReference type="PANTHER" id="PTHR33254">
    <property type="entry name" value="4-HYDROXY-4-METHYL-2-OXOGLUTARATE ALDOLASE 3-RELATED"/>
    <property type="match status" value="1"/>
</dbReference>
<dbReference type="PANTHER" id="PTHR33254:SF29">
    <property type="entry name" value="REGULATOR OF RIBONUCLEASE ACTIVITY A"/>
    <property type="match status" value="1"/>
</dbReference>
<dbReference type="Pfam" id="PF03737">
    <property type="entry name" value="RraA-like"/>
    <property type="match status" value="1"/>
</dbReference>
<dbReference type="SUPFAM" id="SSF89562">
    <property type="entry name" value="RraA-like"/>
    <property type="match status" value="1"/>
</dbReference>
<name>RRAA_SALPA</name>
<comment type="function">
    <text evidence="1">Globally modulates RNA abundance by binding to RNase E (Rne) and regulating its endonucleolytic activity. Can modulate Rne action in a substrate-dependent manner by altering the composition of the degradosome. Modulates RNA-binding and helicase activities of the degradosome.</text>
</comment>
<comment type="subunit">
    <text evidence="1">Homotrimer. Binds to both RNA-binding sites in the C-terminal region of Rne and to RhlB.</text>
</comment>
<comment type="subcellular location">
    <subcellularLocation>
        <location evidence="1">Cytoplasm</location>
    </subcellularLocation>
</comment>
<comment type="similarity">
    <text evidence="1">Belongs to the RraA family.</text>
</comment>
<sequence length="161" mass="17374">MKYDTSELCDIYQEDVNVVEPLFSNFGGRSSFGGQIITVKCFEDNGLLYDLLEQNGRGRVLLVDGGGSVRRALVDAELARLATQNEWEGLVIYGAVRQVDDLEELDIGIQAIAAIPVGAAGEGIGESDVRVNFGGVTFFSGDHLYADNTGIILSEDPLDIE</sequence>
<organism>
    <name type="scientific">Salmonella paratyphi A (strain ATCC 9150 / SARB42)</name>
    <dbReference type="NCBI Taxonomy" id="295319"/>
    <lineage>
        <taxon>Bacteria</taxon>
        <taxon>Pseudomonadati</taxon>
        <taxon>Pseudomonadota</taxon>
        <taxon>Gammaproteobacteria</taxon>
        <taxon>Enterobacterales</taxon>
        <taxon>Enterobacteriaceae</taxon>
        <taxon>Salmonella</taxon>
    </lineage>
</organism>
<reference key="1">
    <citation type="journal article" date="2004" name="Nat. Genet.">
        <title>Comparison of genome degradation in Paratyphi A and Typhi, human-restricted serovars of Salmonella enterica that cause typhoid.</title>
        <authorList>
            <person name="McClelland M."/>
            <person name="Sanderson K.E."/>
            <person name="Clifton S.W."/>
            <person name="Latreille P."/>
            <person name="Porwollik S."/>
            <person name="Sabo A."/>
            <person name="Meyer R."/>
            <person name="Bieri T."/>
            <person name="Ozersky P."/>
            <person name="McLellan M."/>
            <person name="Harkins C.R."/>
            <person name="Wang C."/>
            <person name="Nguyen C."/>
            <person name="Berghoff A."/>
            <person name="Elliott G."/>
            <person name="Kohlberg S."/>
            <person name="Strong C."/>
            <person name="Du F."/>
            <person name="Carter J."/>
            <person name="Kremizki C."/>
            <person name="Layman D."/>
            <person name="Leonard S."/>
            <person name="Sun H."/>
            <person name="Fulton L."/>
            <person name="Nash W."/>
            <person name="Miner T."/>
            <person name="Minx P."/>
            <person name="Delehaunty K."/>
            <person name="Fronick C."/>
            <person name="Magrini V."/>
            <person name="Nhan M."/>
            <person name="Warren W."/>
            <person name="Florea L."/>
            <person name="Spieth J."/>
            <person name="Wilson R.K."/>
        </authorList>
    </citation>
    <scope>NUCLEOTIDE SEQUENCE [LARGE SCALE GENOMIC DNA]</scope>
    <source>
        <strain>ATCC 9150 / SARB42</strain>
    </source>
</reference>
<protein>
    <recommendedName>
        <fullName evidence="1">Regulator of ribonuclease activity A</fullName>
    </recommendedName>
</protein>
<evidence type="ECO:0000255" key="1">
    <source>
        <dbReference type="HAMAP-Rule" id="MF_00471"/>
    </source>
</evidence>
<proteinExistence type="inferred from homology"/>
<gene>
    <name evidence="1" type="primary">rraA</name>
    <name type="ordered locus">SPA3932</name>
</gene>
<feature type="chain" id="PRO_1000013870" description="Regulator of ribonuclease activity A">
    <location>
        <begin position="1"/>
        <end position="161"/>
    </location>
</feature>
<keyword id="KW-0963">Cytoplasm</keyword>